<sequence length="235" mass="26150">KWSSKSPGNYDYPAPQGREAVISEVEQAQEEEEEEASVEFALSSDIEDDYEPELLLVPEGQPVNQPMLAAAQSLHREATKWSSKGNDIIAAAKRMALLMAEMSRLVRGGSGNKRALIQCAKDIAKASDEVTKLAKEVAKQCTDKRIRTNLLQVCERIPTISTQLKILSTVKATMLGRTNISDEESEQATEMLVHNAQNLMQSVKETVREAEAASIKIRTDAGFTLRWARKTPWYQ</sequence>
<comment type="function">
    <text evidence="1">Involved in cell adhesion. May be involved in the attachment of the actin-based microfilaments to the plasma membrane.</text>
</comment>
<comment type="subunit">
    <text evidence="1">Exhibits self-association properties.</text>
</comment>
<comment type="subcellular location">
    <subcellularLocation>
        <location evidence="1">Cell membrane</location>
        <topology evidence="1">Peripheral membrane protein</topology>
        <orientation evidence="1">Cytoplasmic side</orientation>
    </subcellularLocation>
    <subcellularLocation>
        <location evidence="1">Cell junction</location>
        <location evidence="1">Adherens junction</location>
    </subcellularLocation>
    <subcellularLocation>
        <location evidence="1">Cell junction</location>
        <location evidence="1">Focal adhesion</location>
    </subcellularLocation>
    <subcellularLocation>
        <location evidence="2">Cytoplasm</location>
        <location evidence="2">Cytoskeleton</location>
    </subcellularLocation>
    <subcellularLocation>
        <location evidence="3">Cell membrane</location>
        <location evidence="3">Sarcolemma</location>
        <topology evidence="3">Peripheral membrane protein</topology>
        <orientation evidence="3">Cytoplasmic side</orientation>
    </subcellularLocation>
    <subcellularLocation>
        <location evidence="3">Cell projection</location>
        <location evidence="3">Podosome</location>
    </subcellularLocation>
</comment>
<comment type="alternative products">
    <event type="alternative splicing"/>
    <isoform>
        <id>Q04615-1</id>
        <name>2</name>
        <name>Metavinculin</name>
        <sequence type="displayed"/>
    </isoform>
    <isoform>
        <id>Q04615-2</id>
        <name>1</name>
        <name>Vinculin</name>
        <sequence type="described" ref="VSP_006733"/>
    </isoform>
</comment>
<comment type="PTM">
    <text evidence="1">Phosphorylated on serines, threonines and tyrosines.</text>
</comment>
<comment type="PTM">
    <text evidence="1">Acetylated by myristic acid and/or palmitic acid.</text>
</comment>
<comment type="miscellaneous">
    <molecule>Isoform 2</molecule>
    <text>Differs from vinculin by the insertion of a 68 residues domain near the C-terminus.</text>
</comment>
<comment type="similarity">
    <text evidence="5">Belongs to the vinculin/alpha-catenin family.</text>
</comment>
<reference key="1">
    <citation type="journal article" date="1993" name="FEBS Lett.">
        <title>Variable and constant regions in the C-terminus of vinculin and metavinculin. Cloning and expression of fragments in E. coli.</title>
        <authorList>
            <person name="Strasser P."/>
            <person name="Gimona M."/>
            <person name="Herzog M."/>
            <person name="Geiger B."/>
            <person name="Small J.V."/>
        </authorList>
    </citation>
    <scope>NUCLEOTIDE SEQUENCE [MRNA] (ISOFORMS 1 AND 2)</scope>
</reference>
<gene>
    <name type="primary">vcl</name>
</gene>
<proteinExistence type="evidence at transcript level"/>
<evidence type="ECO:0000250" key="1">
    <source>
        <dbReference type="UniProtKB" id="P12003"/>
    </source>
</evidence>
<evidence type="ECO:0000250" key="2">
    <source>
        <dbReference type="UniProtKB" id="P85972"/>
    </source>
</evidence>
<evidence type="ECO:0000250" key="3">
    <source>
        <dbReference type="UniProtKB" id="Q64727"/>
    </source>
</evidence>
<evidence type="ECO:0000303" key="4">
    <source>
    </source>
</evidence>
<evidence type="ECO:0000305" key="5"/>
<feature type="chain" id="PRO_0000064256" description="Vinculin">
    <location>
        <begin position="1" status="less than"/>
        <end position="235"/>
    </location>
</feature>
<feature type="splice variant" id="VSP_006733" description="In isoform 1." evidence="4">
    <location>
        <begin position="7"/>
        <end position="84"/>
    </location>
</feature>
<feature type="non-terminal residue">
    <location>
        <position position="1"/>
    </location>
</feature>
<dbReference type="EMBL" id="Z19541">
    <property type="protein sequence ID" value="CAA79601.1"/>
    <property type="molecule type" value="mRNA"/>
</dbReference>
<dbReference type="PIR" id="S29508">
    <property type="entry name" value="S29508"/>
</dbReference>
<dbReference type="SMR" id="Q04615"/>
<dbReference type="AGR" id="Xenbase:XB-GENE-5759162"/>
<dbReference type="Xenbase" id="XB-GENE-5759162">
    <property type="gene designation" value="vcl.S"/>
</dbReference>
<dbReference type="CD-CODE" id="78E86D56">
    <property type="entry name" value="Mitochondrial cloud"/>
</dbReference>
<dbReference type="Proteomes" id="UP000186698">
    <property type="component" value="Unplaced"/>
</dbReference>
<dbReference type="GO" id="GO:0005912">
    <property type="term" value="C:adherens junction"/>
    <property type="evidence" value="ECO:0007669"/>
    <property type="project" value="UniProtKB-SubCell"/>
</dbReference>
<dbReference type="GO" id="GO:0042995">
    <property type="term" value="C:cell projection"/>
    <property type="evidence" value="ECO:0007669"/>
    <property type="project" value="UniProtKB-KW"/>
</dbReference>
<dbReference type="GO" id="GO:0005737">
    <property type="term" value="C:cytoplasm"/>
    <property type="evidence" value="ECO:0007669"/>
    <property type="project" value="UniProtKB-KW"/>
</dbReference>
<dbReference type="GO" id="GO:0005925">
    <property type="term" value="C:focal adhesion"/>
    <property type="evidence" value="ECO:0007669"/>
    <property type="project" value="UniProtKB-SubCell"/>
</dbReference>
<dbReference type="GO" id="GO:0002102">
    <property type="term" value="C:podosome"/>
    <property type="evidence" value="ECO:0007669"/>
    <property type="project" value="UniProtKB-SubCell"/>
</dbReference>
<dbReference type="GO" id="GO:0042383">
    <property type="term" value="C:sarcolemma"/>
    <property type="evidence" value="ECO:0000250"/>
    <property type="project" value="UniProtKB"/>
</dbReference>
<dbReference type="GO" id="GO:0051015">
    <property type="term" value="F:actin filament binding"/>
    <property type="evidence" value="ECO:0007669"/>
    <property type="project" value="InterPro"/>
</dbReference>
<dbReference type="GO" id="GO:0007155">
    <property type="term" value="P:cell adhesion"/>
    <property type="evidence" value="ECO:0007669"/>
    <property type="project" value="UniProtKB-KW"/>
</dbReference>
<dbReference type="FunFam" id="1.20.120.230:FF:000010">
    <property type="entry name" value="Vinculin a"/>
    <property type="match status" value="1"/>
</dbReference>
<dbReference type="Gene3D" id="1.20.120.230">
    <property type="entry name" value="Alpha-catenin/vinculin-like"/>
    <property type="match status" value="1"/>
</dbReference>
<dbReference type="InterPro" id="IPR036723">
    <property type="entry name" value="Alpha-catenin/vinculin-like_sf"/>
</dbReference>
<dbReference type="InterPro" id="IPR017997">
    <property type="entry name" value="Vinculin"/>
</dbReference>
<dbReference type="InterPro" id="IPR006077">
    <property type="entry name" value="Vinculin/catenin"/>
</dbReference>
<dbReference type="PANTHER" id="PTHR46180">
    <property type="entry name" value="VINCULIN"/>
    <property type="match status" value="1"/>
</dbReference>
<dbReference type="Pfam" id="PF01044">
    <property type="entry name" value="Vinculin"/>
    <property type="match status" value="1"/>
</dbReference>
<dbReference type="PRINTS" id="PR00806">
    <property type="entry name" value="VINCULIN"/>
</dbReference>
<dbReference type="SUPFAM" id="SSF47220">
    <property type="entry name" value="alpha-catenin/vinculin-like"/>
    <property type="match status" value="1"/>
</dbReference>
<keyword id="KW-0009">Actin-binding</keyword>
<keyword id="KW-0025">Alternative splicing</keyword>
<keyword id="KW-0130">Cell adhesion</keyword>
<keyword id="KW-0965">Cell junction</keyword>
<keyword id="KW-1003">Cell membrane</keyword>
<keyword id="KW-0966">Cell projection</keyword>
<keyword id="KW-0963">Cytoplasm</keyword>
<keyword id="KW-0206">Cytoskeleton</keyword>
<keyword id="KW-0449">Lipoprotein</keyword>
<keyword id="KW-0472">Membrane</keyword>
<keyword id="KW-0597">Phosphoprotein</keyword>
<keyword id="KW-1185">Reference proteome</keyword>
<keyword id="KW-0677">Repeat</keyword>
<name>VINC_XENLA</name>
<accession>Q04615</accession>
<organism>
    <name type="scientific">Xenopus laevis</name>
    <name type="common">African clawed frog</name>
    <dbReference type="NCBI Taxonomy" id="8355"/>
    <lineage>
        <taxon>Eukaryota</taxon>
        <taxon>Metazoa</taxon>
        <taxon>Chordata</taxon>
        <taxon>Craniata</taxon>
        <taxon>Vertebrata</taxon>
        <taxon>Euteleostomi</taxon>
        <taxon>Amphibia</taxon>
        <taxon>Batrachia</taxon>
        <taxon>Anura</taxon>
        <taxon>Pipoidea</taxon>
        <taxon>Pipidae</taxon>
        <taxon>Xenopodinae</taxon>
        <taxon>Xenopus</taxon>
        <taxon>Xenopus</taxon>
    </lineage>
</organism>
<protein>
    <recommendedName>
        <fullName>Vinculin</fullName>
    </recommendedName>
    <alternativeName>
        <fullName>Metavinculin</fullName>
    </alternativeName>
</protein>